<sequence>MAWRCPRMGRVPLAWCLALCGWACMAPRGTQAEESPFVGNPGNITGARGLTGTLRCQLQVQGEPPEVHWLRDGQILELADSTQTQVPLGEDEQDDWIVVSQLRITSLQLSDTGQYQCLVFLGHQTFVSQPGYVGLEGLPYFLEEPEDRTVAANTPFNLSCQAQGPPEPVDLLWLQDAVPLATAPGHGPQRSLHVPGLNKTSSFSCEAHNAKGVTTSRTATITVLPQQPRNLHLVSRQPTELEVAWTPGLSGIYPLTHCTLQAVLSDDGMGIQAGEPDPPEEPLTSQASVPPHQLRLGSLHPHTPYHIRVACTSSQGPSSWTHWLPVETPEGVPLGPPENISATRNGSQAFVHWQEPRAPLQGTLLGYRLAYQGQDTPEVLMDIGLRQEVTLELQGDGSVSNLTVCVAAYTAAGDGPWSLPVPLEAWRPGQAQPVHQLVKEPSTPAFSWPWWYVLLGAVVAAACVLILALFLVHRRKKETRYGEVFEPTVERGELVVRYRVRKSYSRRTTEATLNSLGISEELKEKLRDVMVDRHKVALGKTLGEGEFGAVMEGQLNQDDSILKVAVKTMKIAICTRSELEDFLSEAVCMKEFDHPNVMRLIGVCFQGSERESFPAPVVILPFMKHGDLHSFLLYSRLGDQPVYLPTQMLVKFMADIASGMEYLSTKRFIHRDLAARNCMLNENMSVCVADFGLSKKIYNGDYYRQGRIAKMPVKWIAIESLADRVYTSKSDVWSFGVTMWEIATRGQTPYPGVENSEIYDYLRQGNRLKQPADCLDGLYALMSRCWELNPQDRPSFTELREDLENTLKALPPAQEPDEILYVNMDEGGGYPEPPGAAGGADPPTQPDPKDSCSCLTAAEVHPAGRYVLCPSTTPSPAQPADRGSPAAPGQEDGA</sequence>
<accession>P30530</accession>
<accession>Q8N5L2</accession>
<accession>Q9UD27</accession>
<evidence type="ECO:0000250" key="1"/>
<evidence type="ECO:0000255" key="2"/>
<evidence type="ECO:0000255" key="3">
    <source>
        <dbReference type="PROSITE-ProRule" id="PRU00114"/>
    </source>
</evidence>
<evidence type="ECO:0000255" key="4">
    <source>
        <dbReference type="PROSITE-ProRule" id="PRU00159"/>
    </source>
</evidence>
<evidence type="ECO:0000255" key="5">
    <source>
        <dbReference type="PROSITE-ProRule" id="PRU00316"/>
    </source>
</evidence>
<evidence type="ECO:0000255" key="6">
    <source>
        <dbReference type="PROSITE-ProRule" id="PRU10028"/>
    </source>
</evidence>
<evidence type="ECO:0000256" key="7">
    <source>
        <dbReference type="SAM" id="MobiDB-lite"/>
    </source>
</evidence>
<evidence type="ECO:0000269" key="8">
    <source>
    </source>
</evidence>
<evidence type="ECO:0000269" key="9">
    <source>
    </source>
</evidence>
<evidence type="ECO:0000269" key="10">
    <source>
    </source>
</evidence>
<evidence type="ECO:0000269" key="11">
    <source>
    </source>
</evidence>
<evidence type="ECO:0000269" key="12">
    <source>
    </source>
</evidence>
<evidence type="ECO:0000269" key="13">
    <source>
    </source>
</evidence>
<evidence type="ECO:0000269" key="14">
    <source>
    </source>
</evidence>
<evidence type="ECO:0000269" key="15">
    <source>
    </source>
</evidence>
<evidence type="ECO:0000269" key="16">
    <source>
    </source>
</evidence>
<evidence type="ECO:0000269" key="17">
    <source>
    </source>
</evidence>
<evidence type="ECO:0000269" key="18">
    <source>
    </source>
</evidence>
<evidence type="ECO:0000269" key="19">
    <source>
    </source>
</evidence>
<evidence type="ECO:0000269" key="20">
    <source>
    </source>
</evidence>
<evidence type="ECO:0000269" key="21">
    <source>
    </source>
</evidence>
<evidence type="ECO:0000269" key="22">
    <source>
    </source>
</evidence>
<evidence type="ECO:0000269" key="23">
    <source>
    </source>
</evidence>
<evidence type="ECO:0000269" key="24">
    <source>
    </source>
</evidence>
<evidence type="ECO:0000269" key="25">
    <source>
    </source>
</evidence>
<evidence type="ECO:0000269" key="26">
    <source>
    </source>
</evidence>
<evidence type="ECO:0000269" key="27">
    <source>
    </source>
</evidence>
<evidence type="ECO:0000269" key="28">
    <source>
    </source>
</evidence>
<evidence type="ECO:0000269" key="29">
    <source>
    </source>
</evidence>
<evidence type="ECO:0000269" key="30">
    <source>
    </source>
</evidence>
<evidence type="ECO:0000269" key="31">
    <source>
    </source>
</evidence>
<evidence type="ECO:0000269" key="32">
    <source>
    </source>
</evidence>
<evidence type="ECO:0000269" key="33">
    <source>
    </source>
</evidence>
<evidence type="ECO:0000269" key="34">
    <source>
    </source>
</evidence>
<evidence type="ECO:0000303" key="35">
    <source>
    </source>
</evidence>
<evidence type="ECO:0000305" key="36"/>
<evidence type="ECO:0007744" key="37">
    <source>
    </source>
</evidence>
<evidence type="ECO:0007829" key="38">
    <source>
        <dbReference type="PDB" id="4RA0"/>
    </source>
</evidence>
<evidence type="ECO:0007829" key="39">
    <source>
        <dbReference type="PDB" id="5U6B"/>
    </source>
</evidence>
<evidence type="ECO:0007829" key="40">
    <source>
        <dbReference type="PDB" id="5VXZ"/>
    </source>
</evidence>
<keyword id="KW-0002">3D-structure</keyword>
<keyword id="KW-0025">Alternative splicing</keyword>
<keyword id="KW-0067">ATP-binding</keyword>
<keyword id="KW-1003">Cell membrane</keyword>
<keyword id="KW-0221">Differentiation</keyword>
<keyword id="KW-1015">Disulfide bond</keyword>
<keyword id="KW-0325">Glycoprotein</keyword>
<keyword id="KW-1183">Host cell receptor for virus entry</keyword>
<keyword id="KW-0945">Host-virus interaction</keyword>
<keyword id="KW-0391">Immunity</keyword>
<keyword id="KW-0393">Immunoglobulin domain</keyword>
<keyword id="KW-0399">Innate immunity</keyword>
<keyword id="KW-0418">Kinase</keyword>
<keyword id="KW-0472">Membrane</keyword>
<keyword id="KW-0547">Nucleotide-binding</keyword>
<keyword id="KW-0553">Oncogene</keyword>
<keyword id="KW-0597">Phosphoprotein</keyword>
<keyword id="KW-1267">Proteomics identification</keyword>
<keyword id="KW-0656">Proto-oncogene</keyword>
<keyword id="KW-0675">Receptor</keyword>
<keyword id="KW-1185">Reference proteome</keyword>
<keyword id="KW-0677">Repeat</keyword>
<keyword id="KW-0732">Signal</keyword>
<keyword id="KW-0808">Transferase</keyword>
<keyword id="KW-0812">Transmembrane</keyword>
<keyword id="KW-1133">Transmembrane helix</keyword>
<keyword id="KW-0829">Tyrosine-protein kinase</keyword>
<keyword id="KW-0832">Ubl conjugation</keyword>
<feature type="signal peptide" evidence="2">
    <location>
        <begin position="1"/>
        <end position="25"/>
    </location>
</feature>
<feature type="chain" id="PRO_0000024481" description="Tyrosine-protein kinase receptor UFO">
    <location>
        <begin position="26"/>
        <end position="894"/>
    </location>
</feature>
<feature type="topological domain" description="Extracellular" evidence="2">
    <location>
        <begin position="26"/>
        <end position="451"/>
    </location>
</feature>
<feature type="transmembrane region" description="Helical" evidence="2">
    <location>
        <begin position="452"/>
        <end position="472"/>
    </location>
</feature>
<feature type="topological domain" description="Cytoplasmic" evidence="2">
    <location>
        <begin position="473"/>
        <end position="894"/>
    </location>
</feature>
<feature type="domain" description="Ig-like C2-type 1">
    <location>
        <begin position="27"/>
        <end position="128"/>
    </location>
</feature>
<feature type="domain" description="Ig-like C2-type 2">
    <location>
        <begin position="139"/>
        <end position="222"/>
    </location>
</feature>
<feature type="domain" description="Fibronectin type-III 1" evidence="5">
    <location>
        <begin position="227"/>
        <end position="331"/>
    </location>
</feature>
<feature type="domain" description="Fibronectin type-III 2" evidence="5">
    <location>
        <begin position="336"/>
        <end position="428"/>
    </location>
</feature>
<feature type="domain" description="Protein kinase" evidence="4">
    <location>
        <begin position="536"/>
        <end position="807"/>
    </location>
</feature>
<feature type="region of interest" description="Interaction with GAS6">
    <location>
        <begin position="26"/>
        <end position="92"/>
    </location>
</feature>
<feature type="region of interest" description="Disordered" evidence="7">
    <location>
        <begin position="823"/>
        <end position="853"/>
    </location>
</feature>
<feature type="region of interest" description="Disordered" evidence="7">
    <location>
        <begin position="866"/>
        <end position="894"/>
    </location>
</feature>
<feature type="active site" description="Proton acceptor" evidence="4 6">
    <location>
        <position position="672"/>
    </location>
</feature>
<feature type="binding site" evidence="4">
    <location>
        <begin position="542"/>
        <end position="550"/>
    </location>
    <ligand>
        <name>ATP</name>
        <dbReference type="ChEBI" id="CHEBI:30616"/>
    </ligand>
</feature>
<feature type="binding site" evidence="4">
    <location>
        <position position="567"/>
    </location>
    <ligand>
        <name>ATP</name>
        <dbReference type="ChEBI" id="CHEBI:30616"/>
    </ligand>
</feature>
<feature type="modified residue" description="Phosphotyrosine; by autocatalysis" evidence="1">
    <location>
        <position position="703"/>
    </location>
</feature>
<feature type="modified residue" description="Phosphotyrosine; by autocatalysis" evidence="20 34">
    <location>
        <position position="779"/>
    </location>
</feature>
<feature type="modified residue" description="Phosphotyrosine; by autocatalysis" evidence="20 34">
    <location>
        <position position="821"/>
    </location>
</feature>
<feature type="modified residue" description="Phosphotyrosine; by autocatalysis" evidence="20 34">
    <location>
        <position position="866"/>
    </location>
</feature>
<feature type="modified residue" description="Phosphoserine" evidence="37">
    <location>
        <position position="884"/>
    </location>
</feature>
<feature type="glycosylation site" description="N-linked (GlcNAc...) asparagine" evidence="2">
    <location>
        <position position="43"/>
    </location>
</feature>
<feature type="glycosylation site" description="N-linked (GlcNAc...) asparagine" evidence="2">
    <location>
        <position position="157"/>
    </location>
</feature>
<feature type="glycosylation site" description="N-linked (GlcNAc...) asparagine" evidence="2">
    <location>
        <position position="198"/>
    </location>
</feature>
<feature type="glycosylation site" description="N-linked (GlcNAc...) asparagine" evidence="2">
    <location>
        <position position="339"/>
    </location>
</feature>
<feature type="glycosylation site" description="N-linked (GlcNAc...) asparagine" evidence="2">
    <location>
        <position position="345"/>
    </location>
</feature>
<feature type="glycosylation site" description="N-linked (GlcNAc...) asparagine" evidence="2">
    <location>
        <position position="401"/>
    </location>
</feature>
<feature type="disulfide bond" evidence="3">
    <location>
        <begin position="56"/>
        <end position="117"/>
    </location>
</feature>
<feature type="disulfide bond" evidence="3">
    <location>
        <begin position="160"/>
        <end position="205"/>
    </location>
</feature>
<feature type="splice variant" id="VSP_005017" description="In isoform Short." evidence="35">
    <location>
        <begin position="429"/>
        <end position="437"/>
    </location>
</feature>
<feature type="sequence variant" id="VAR_045596" description="In dbSNP:rs35202236." evidence="19">
    <original>T</original>
    <variation>M</variation>
    <location>
        <position position="112"/>
    </location>
</feature>
<feature type="sequence variant" id="VAR_057990" description="In dbSNP:rs7249222.">
    <original>D</original>
    <variation>N</variation>
    <location>
        <position position="266"/>
    </location>
</feature>
<feature type="sequence variant" id="VAR_045597" description="In a lung neuroendocrine carcinoma sample; somatic mutation; dbSNP:rs751738506." evidence="19">
    <original>R</original>
    <variation>W</variation>
    <location>
        <position position="295"/>
    </location>
</feature>
<feature type="sequence variant" id="VAR_041877" description="In a gastric adenocarcinoma sample; somatic mutation; dbSNP:rs747576071." evidence="19">
    <original>R</original>
    <variation>C</variation>
    <location>
        <position position="499"/>
    </location>
</feature>
<feature type="sequence variant" id="VAR_041878" description="In dbSNP:rs1240393707." evidence="19">
    <original>S</original>
    <variation>G</variation>
    <location>
        <position position="515"/>
    </location>
</feature>
<feature type="mutagenesis site" description="Slightly reduced affinity for GAS6." evidence="16">
    <original>E</original>
    <variation>R</variation>
    <location>
        <position position="63"/>
    </location>
</feature>
<feature type="mutagenesis site" description="Reduced affinity for GAS6." evidence="16">
    <original>E</original>
    <variation>R</variation>
    <location>
        <position position="66"/>
    </location>
</feature>
<feature type="mutagenesis site" description="Reduced affinity for GAS6." evidence="16">
    <original>T</original>
    <variation>R</variation>
    <location>
        <position position="84"/>
    </location>
</feature>
<feature type="mutagenesis site" description="Catalytically inactive mutant." evidence="27">
    <original>K</original>
    <variation>M</variation>
    <location>
        <position position="567"/>
    </location>
</feature>
<feature type="sequence conflict" description="In Ref. 3; AAB20305/CAA40338." evidence="36" ref="3">
    <original>T</original>
    <variation>P</variation>
    <location>
        <position position="303"/>
    </location>
</feature>
<feature type="sequence conflict" description="In Ref. 2; AAA61243." evidence="36" ref="2">
    <original>E</original>
    <variation>K</variation>
    <location>
        <position position="338"/>
    </location>
</feature>
<feature type="sequence conflict" description="In Ref. 3; AAB20305/CAA40338." evidence="36" ref="3">
    <original>Q</original>
    <variation>E</variation>
    <location>
        <position position="430"/>
    </location>
</feature>
<feature type="sequence conflict" description="In Ref. 3; AAB20305/CAA40338." evidence="36" ref="3">
    <original>D</original>
    <variation>G</variation>
    <location>
        <position position="639"/>
    </location>
</feature>
<feature type="sequence conflict" description="In Ref. 7; no nucleotide entry." evidence="36" ref="7">
    <original>K</original>
    <variation>I</variation>
    <location>
        <position position="696"/>
    </location>
</feature>
<feature type="sequence conflict" description="In Ref. 5; AAH32229." evidence="36" ref="5">
    <original>Q</original>
    <variation>R</variation>
    <location>
        <position position="764"/>
    </location>
</feature>
<feature type="strand" evidence="40">
    <location>
        <begin position="37"/>
        <end position="39"/>
    </location>
</feature>
<feature type="strand" evidence="38">
    <location>
        <begin position="44"/>
        <end position="46"/>
    </location>
</feature>
<feature type="strand" evidence="40">
    <location>
        <begin position="52"/>
        <end position="63"/>
    </location>
</feature>
<feature type="strand" evidence="40">
    <location>
        <begin position="68"/>
        <end position="71"/>
    </location>
</feature>
<feature type="strand" evidence="40">
    <location>
        <begin position="80"/>
        <end position="87"/>
    </location>
</feature>
<feature type="strand" evidence="40">
    <location>
        <begin position="89"/>
        <end position="91"/>
    </location>
</feature>
<feature type="strand" evidence="40">
    <location>
        <begin position="94"/>
        <end position="106"/>
    </location>
</feature>
<feature type="helix" evidence="40">
    <location>
        <begin position="109"/>
        <end position="111"/>
    </location>
</feature>
<feature type="strand" evidence="40">
    <location>
        <begin position="113"/>
        <end position="121"/>
    </location>
</feature>
<feature type="strand" evidence="40">
    <location>
        <begin position="124"/>
        <end position="127"/>
    </location>
</feature>
<feature type="strand" evidence="40">
    <location>
        <begin position="131"/>
        <end position="134"/>
    </location>
</feature>
<feature type="strand" evidence="38">
    <location>
        <begin position="140"/>
        <end position="143"/>
    </location>
</feature>
<feature type="strand" evidence="38">
    <location>
        <begin position="148"/>
        <end position="150"/>
    </location>
</feature>
<feature type="strand" evidence="38">
    <location>
        <begin position="156"/>
        <end position="159"/>
    </location>
</feature>
<feature type="strand" evidence="38">
    <location>
        <begin position="161"/>
        <end position="163"/>
    </location>
</feature>
<feature type="strand" evidence="38">
    <location>
        <begin position="165"/>
        <end position="167"/>
    </location>
</feature>
<feature type="strand" evidence="38">
    <location>
        <begin position="170"/>
        <end position="175"/>
    </location>
</feature>
<feature type="strand" evidence="38">
    <location>
        <begin position="178"/>
        <end position="187"/>
    </location>
</feature>
<feature type="strand" evidence="38">
    <location>
        <begin position="190"/>
        <end position="194"/>
    </location>
</feature>
<feature type="strand" evidence="38">
    <location>
        <begin position="201"/>
        <end position="209"/>
    </location>
</feature>
<feature type="strand" evidence="38">
    <location>
        <begin position="212"/>
        <end position="215"/>
    </location>
</feature>
<feature type="strand" evidence="38">
    <location>
        <begin position="219"/>
        <end position="223"/>
    </location>
</feature>
<feature type="strand" evidence="39">
    <location>
        <begin position="515"/>
        <end position="517"/>
    </location>
</feature>
<feature type="helix" evidence="39">
    <location>
        <begin position="524"/>
        <end position="529"/>
    </location>
</feature>
<feature type="helix" evidence="39">
    <location>
        <begin position="533"/>
        <end position="535"/>
    </location>
</feature>
<feature type="strand" evidence="39">
    <location>
        <begin position="536"/>
        <end position="544"/>
    </location>
</feature>
<feature type="strand" evidence="39">
    <location>
        <begin position="546"/>
        <end position="556"/>
    </location>
</feature>
<feature type="strand" evidence="39">
    <location>
        <begin position="558"/>
        <end position="571"/>
    </location>
</feature>
<feature type="helix" evidence="39">
    <location>
        <begin position="576"/>
        <end position="590"/>
    </location>
</feature>
<feature type="strand" evidence="39">
    <location>
        <begin position="602"/>
        <end position="605"/>
    </location>
</feature>
<feature type="strand" evidence="39">
    <location>
        <begin position="616"/>
        <end position="621"/>
    </location>
</feature>
<feature type="helix" evidence="39">
    <location>
        <begin position="628"/>
        <end position="637"/>
    </location>
</feature>
<feature type="strand" evidence="39">
    <location>
        <begin position="638"/>
        <end position="640"/>
    </location>
</feature>
<feature type="helix" evidence="39">
    <location>
        <begin position="646"/>
        <end position="665"/>
    </location>
</feature>
<feature type="helix" evidence="39">
    <location>
        <begin position="675"/>
        <end position="677"/>
    </location>
</feature>
<feature type="strand" evidence="39">
    <location>
        <begin position="678"/>
        <end position="680"/>
    </location>
</feature>
<feature type="strand" evidence="39">
    <location>
        <begin position="686"/>
        <end position="688"/>
    </location>
</feature>
<feature type="strand" evidence="39">
    <location>
        <begin position="698"/>
        <end position="700"/>
    </location>
</feature>
<feature type="helix" evidence="39">
    <location>
        <begin position="713"/>
        <end position="715"/>
    </location>
</feature>
<feature type="helix" evidence="39">
    <location>
        <begin position="718"/>
        <end position="723"/>
    </location>
</feature>
<feature type="helix" evidence="39">
    <location>
        <begin position="728"/>
        <end position="743"/>
    </location>
</feature>
<feature type="helix" evidence="39">
    <location>
        <begin position="755"/>
        <end position="763"/>
    </location>
</feature>
<feature type="helix" evidence="39">
    <location>
        <begin position="776"/>
        <end position="785"/>
    </location>
</feature>
<feature type="helix" evidence="39">
    <location>
        <begin position="790"/>
        <end position="792"/>
    </location>
</feature>
<feature type="helix" evidence="39">
    <location>
        <begin position="796"/>
        <end position="809"/>
    </location>
</feature>
<name>UFO_HUMAN</name>
<gene>
    <name type="primary">AXL</name>
    <name type="synonym">UFO</name>
</gene>
<protein>
    <recommendedName>
        <fullName>Tyrosine-protein kinase receptor UFO</fullName>
        <ecNumber evidence="27">2.7.10.1</ecNumber>
    </recommendedName>
    <alternativeName>
        <fullName>AXL oncogene</fullName>
    </alternativeName>
</protein>
<organism>
    <name type="scientific">Homo sapiens</name>
    <name type="common">Human</name>
    <dbReference type="NCBI Taxonomy" id="9606"/>
    <lineage>
        <taxon>Eukaryota</taxon>
        <taxon>Metazoa</taxon>
        <taxon>Chordata</taxon>
        <taxon>Craniata</taxon>
        <taxon>Vertebrata</taxon>
        <taxon>Euteleostomi</taxon>
        <taxon>Mammalia</taxon>
        <taxon>Eutheria</taxon>
        <taxon>Euarchontoglires</taxon>
        <taxon>Primates</taxon>
        <taxon>Haplorrhini</taxon>
        <taxon>Catarrhini</taxon>
        <taxon>Hominidae</taxon>
        <taxon>Homo</taxon>
    </lineage>
</organism>
<comment type="function">
    <text evidence="8 9 10 12 13 14 17 21">Receptor tyrosine kinase that transduces signals from the extracellular matrix into the cytoplasm by binding growth factor GAS6 and which is thus regulating many physiological processes including cell survival, cell proliferation, migration and differentiation. Ligand binding at the cell surface induces dimerization and autophosphorylation of AXL. Following activation by ligand, AXL binds and induces tyrosine phosphorylation of PI3-kinase subunits PIK3R1, PIK3R2 and PIK3R3; but also GRB2, PLCG1, LCK and PTPN11. Other downstream substrate candidates for AXL are CBL, NCK2, SOCS1 and TNS2. Recruitment of GRB2 and phosphatidylinositol 3 kinase regulatory subunits by AXL leads to the downstream activation of the AKT kinase. GAS6/AXL signaling plays a role in various processes such as endothelial cell survival during acidification by preventing apoptosis, optimal cytokine signaling during human natural killer cell development, hepatic regeneration, gonadotropin-releasing hormone neuron survival and migration, platelet activation, or regulation of thrombotic responses. Also plays an important role in inhibition of Toll-like receptors (TLRs)-mediated innate immune response.</text>
</comment>
<comment type="function">
    <text evidence="18 23 24 26">(Microbial infection) Acts as a receptor for lassa virus and lymphocytic choriomeningitis virus, possibly through GAS6 binding to phosphatidyl-serine at the surface of virion envelope.</text>
</comment>
<comment type="function">
    <text evidence="25">(Microbial infection) Acts as a receptor for Ebolavirus, possibly through GAS6 binding to phosphatidyl-serine at the surface of virion envelope.</text>
</comment>
<comment type="function">
    <text evidence="27 28 30">(Microbial infection) Promotes Zika virus entry in glial cells, Sertoli cells and astrocytes (PubMed:28076778, PubMed:29379210, PubMed:31311882). Additionally, Zika virus potentiates AXL kinase activity to antagonize type I interferon signaling and thereby promotes infection (PubMed:28076778). Interferon signaling inhibition occurs via an SOCS1-dependent mechanism (PubMed:29379210).</text>
</comment>
<comment type="catalytic activity">
    <reaction evidence="6 27">
        <text>L-tyrosyl-[protein] + ATP = O-phospho-L-tyrosyl-[protein] + ADP + H(+)</text>
        <dbReference type="Rhea" id="RHEA:10596"/>
        <dbReference type="Rhea" id="RHEA-COMP:10136"/>
        <dbReference type="Rhea" id="RHEA-COMP:20101"/>
        <dbReference type="ChEBI" id="CHEBI:15378"/>
        <dbReference type="ChEBI" id="CHEBI:30616"/>
        <dbReference type="ChEBI" id="CHEBI:46858"/>
        <dbReference type="ChEBI" id="CHEBI:61978"/>
        <dbReference type="ChEBI" id="CHEBI:456216"/>
        <dbReference type="EC" id="2.7.10.1"/>
    </reaction>
</comment>
<comment type="activity regulation">
    <text evidence="13 33">Activated by GAS6-binding and subsequent autophosphorylation.</text>
</comment>
<comment type="subunit">
    <text evidence="11 15 16 20 22 31 33 34">Heterodimer and heterotetramer with ligand GAS6. Interacts with CBL, GRB2, LCK, NCK2, PIK3R1, PIK3R2, PIK3R3, PLCG1, SOCS1 and TNS2. Part of a complex including AXL, TNK2 and GRB2, in which GRB2 promotes AXL recruitment by TNK2.</text>
</comment>
<comment type="interaction">
    <interactant intactId="EBI-2850927">
        <id>P30530</id>
    </interactant>
    <interactant intactId="EBI-297353">
        <id>P00533</id>
        <label>EGFR</label>
    </interactant>
    <organismsDiffer>false</organismsDiffer>
    <experiments>4</experiments>
</comment>
<comment type="interaction">
    <interactant intactId="EBI-2850927">
        <id>P30530</id>
    </interactant>
    <interactant intactId="EBI-702104">
        <id>P29317</id>
        <label>EPHA2</label>
    </interactant>
    <organismsDiffer>false</organismsDiffer>
    <experiments>2</experiments>
</comment>
<comment type="interaction">
    <interactant intactId="EBI-2850927">
        <id>P30530</id>
    </interactant>
    <interactant intactId="EBI-21517417">
        <id>Q14393-2</id>
        <label>GAS6</label>
    </interactant>
    <organismsDiffer>false</organismsDiffer>
    <experiments>8</experiments>
</comment>
<comment type="interaction">
    <interactant intactId="EBI-2850927">
        <id>P30530</id>
    </interactant>
    <interactant intactId="EBI-401755">
        <id>P62993</id>
        <label>GRB2</label>
    </interactant>
    <organismsDiffer>false</organismsDiffer>
    <experiments>4</experiments>
</comment>
<comment type="interaction">
    <interactant intactId="EBI-2850927">
        <id>P30530</id>
    </interactant>
    <interactant intactId="EBI-352572">
        <id>P08238</id>
        <label>HSP90AB1</label>
    </interactant>
    <organismsDiffer>false</organismsDiffer>
    <experiments>3</experiments>
</comment>
<comment type="interaction">
    <interactant intactId="EBI-2850927">
        <id>P30530</id>
    </interactant>
    <interactant intactId="EBI-79464">
        <id>P27986</id>
        <label>PIK3R1</label>
    </interactant>
    <organismsDiffer>false</organismsDiffer>
    <experiments>3</experiments>
</comment>
<comment type="interaction">
    <interactant intactId="EBI-2850927">
        <id>P30530</id>
    </interactant>
    <interactant intactId="EBI-25474821">
        <id>P0DTC2</id>
        <label>S</label>
    </interactant>
    <organismsDiffer>true</organismsDiffer>
    <experiments>9</experiments>
</comment>
<comment type="subcellular location">
    <subcellularLocation>
        <location evidence="27 28 32">Cell membrane</location>
        <topology evidence="32">Single-pass type I membrane protein</topology>
    </subcellularLocation>
</comment>
<comment type="alternative products">
    <event type="alternative splicing"/>
    <isoform>
        <id>P30530-1</id>
        <name>Long</name>
        <sequence type="displayed"/>
    </isoform>
    <isoform>
        <id>P30530-2</id>
        <name>Short</name>
        <sequence type="described" ref="VSP_005017"/>
    </isoform>
</comment>
<comment type="tissue specificity">
    <text evidence="32">Highly expressed in metastatic colon tumors. Expressed in primary colon tumors. Weakly expressed in normal colon tissue.</text>
</comment>
<comment type="induction">
    <text evidence="29">(Microbial infection) Up-regulated by Aedes aegypti lymphotoxin beta receptor inhibitor during Zika virus infection.</text>
</comment>
<comment type="PTM">
    <text evidence="15">Monoubiquitinated upon GAS6-binding. A very small proportion of the receptor could be subjected to polyubiquitination in a very transient fashion.</text>
</comment>
<comment type="PTM">
    <text evidence="20 34">Phosphorylated at tyrosine residues by autocatalysis, which activates kinase activity.</text>
</comment>
<comment type="disease">
    <text>AXL and its ligand GAS6 are highly expressed in thyroid carcinoma tissues, and might thus be involved in thyroid tumorigenesis. Overexpression of AXL and its ligand was also detected in many other cancers such as myeloproliferative disorders, prostatic carcinoma cells, or breast cancer.</text>
</comment>
<comment type="similarity">
    <text evidence="4">Belongs to the protein kinase superfamily. Tyr protein kinase family. AXL/UFO subfamily.</text>
</comment>
<comment type="online information" name="Atlas of Genetics and Cytogenetics in Oncology and Haematology">
    <link uri="https://atlasgeneticsoncology.org/gene/733/AXL"/>
</comment>
<proteinExistence type="evidence at protein level"/>
<reference key="1">
    <citation type="journal article" date="1990" name="Proc. Natl. Acad. Sci. U.S.A.">
        <title>Putative tyrosine kinases expressed in K-562 human leukemia cells.</title>
        <authorList>
            <person name="Partanen J."/>
            <person name="Maekelae T.P."/>
            <person name="Alitalo R."/>
            <person name="Lehvaeslaiho H."/>
            <person name="Alitalo K."/>
        </authorList>
    </citation>
    <scope>NUCLEOTIDE SEQUENCE [MRNA]</scope>
</reference>
<reference key="2">
    <citation type="journal article" date="1991" name="Mol. Cell. Biol.">
        <title>AXL, a transforming gene isolated from primary human myeloid leukemia cells, encodes a novel receptor tyrosine kinase.</title>
        <authorList>
            <person name="O'Bryan J.P."/>
            <person name="Frye R.A."/>
            <person name="Cogswell P.C."/>
            <person name="Neubauer A."/>
            <person name="Kitch B."/>
            <person name="Prokop C."/>
            <person name="Espinosa R."/>
            <person name="le Beau M.M."/>
            <person name="Earp H."/>
            <person name="Liu E.T."/>
        </authorList>
    </citation>
    <scope>NUCLEOTIDE SEQUENCE [MRNA] (ISOFORM SHORT)</scope>
    <scope>ROLE IN MYELOID LEUKEMIA</scope>
    <source>
        <tissue>Fibroblast</tissue>
    </source>
</reference>
<reference key="3">
    <citation type="journal article" date="1991" name="Oncogene">
        <title>A novel putative tyrosine kinase receptor with oncogenic potential.</title>
        <authorList>
            <person name="Janssen J.W.G."/>
            <person name="Schulz A.S."/>
            <person name="Steenvoorden A.C.M."/>
            <person name="Schmidberger M."/>
            <person name="Strehl S."/>
            <person name="Ambros P."/>
            <person name="Bartram C.R."/>
        </authorList>
    </citation>
    <scope>NUCLEOTIDE SEQUENCE [MRNA] (ISOFORM LONG)</scope>
</reference>
<reference key="4">
    <citation type="journal article" date="2004" name="Nature">
        <title>The DNA sequence and biology of human chromosome 19.</title>
        <authorList>
            <person name="Grimwood J."/>
            <person name="Gordon L.A."/>
            <person name="Olsen A.S."/>
            <person name="Terry A."/>
            <person name="Schmutz J."/>
            <person name="Lamerdin J.E."/>
            <person name="Hellsten U."/>
            <person name="Goodstein D."/>
            <person name="Couronne O."/>
            <person name="Tran-Gyamfi M."/>
            <person name="Aerts A."/>
            <person name="Altherr M."/>
            <person name="Ashworth L."/>
            <person name="Bajorek E."/>
            <person name="Black S."/>
            <person name="Branscomb E."/>
            <person name="Caenepeel S."/>
            <person name="Carrano A.V."/>
            <person name="Caoile C."/>
            <person name="Chan Y.M."/>
            <person name="Christensen M."/>
            <person name="Cleland C.A."/>
            <person name="Copeland A."/>
            <person name="Dalin E."/>
            <person name="Dehal P."/>
            <person name="Denys M."/>
            <person name="Detter J.C."/>
            <person name="Escobar J."/>
            <person name="Flowers D."/>
            <person name="Fotopulos D."/>
            <person name="Garcia C."/>
            <person name="Georgescu A.M."/>
            <person name="Glavina T."/>
            <person name="Gomez M."/>
            <person name="Gonzales E."/>
            <person name="Groza M."/>
            <person name="Hammon N."/>
            <person name="Hawkins T."/>
            <person name="Haydu L."/>
            <person name="Ho I."/>
            <person name="Huang W."/>
            <person name="Israni S."/>
            <person name="Jett J."/>
            <person name="Kadner K."/>
            <person name="Kimball H."/>
            <person name="Kobayashi A."/>
            <person name="Larionov V."/>
            <person name="Leem S.-H."/>
            <person name="Lopez F."/>
            <person name="Lou Y."/>
            <person name="Lowry S."/>
            <person name="Malfatti S."/>
            <person name="Martinez D."/>
            <person name="McCready P.M."/>
            <person name="Medina C."/>
            <person name="Morgan J."/>
            <person name="Nelson K."/>
            <person name="Nolan M."/>
            <person name="Ovcharenko I."/>
            <person name="Pitluck S."/>
            <person name="Pollard M."/>
            <person name="Popkie A.P."/>
            <person name="Predki P."/>
            <person name="Quan G."/>
            <person name="Ramirez L."/>
            <person name="Rash S."/>
            <person name="Retterer J."/>
            <person name="Rodriguez A."/>
            <person name="Rogers S."/>
            <person name="Salamov A."/>
            <person name="Salazar A."/>
            <person name="She X."/>
            <person name="Smith D."/>
            <person name="Slezak T."/>
            <person name="Solovyev V."/>
            <person name="Thayer N."/>
            <person name="Tice H."/>
            <person name="Tsai M."/>
            <person name="Ustaszewska A."/>
            <person name="Vo N."/>
            <person name="Wagner M."/>
            <person name="Wheeler J."/>
            <person name="Wu K."/>
            <person name="Xie G."/>
            <person name="Yang J."/>
            <person name="Dubchak I."/>
            <person name="Furey T.S."/>
            <person name="DeJong P."/>
            <person name="Dickson M."/>
            <person name="Gordon D."/>
            <person name="Eichler E.E."/>
            <person name="Pennacchio L.A."/>
            <person name="Richardson P."/>
            <person name="Stubbs L."/>
            <person name="Rokhsar D.S."/>
            <person name="Myers R.M."/>
            <person name="Rubin E.M."/>
            <person name="Lucas S.M."/>
        </authorList>
    </citation>
    <scope>NUCLEOTIDE SEQUENCE [LARGE SCALE GENOMIC DNA]</scope>
</reference>
<reference key="5">
    <citation type="journal article" date="2004" name="Genome Res.">
        <title>The status, quality, and expansion of the NIH full-length cDNA project: the Mammalian Gene Collection (MGC).</title>
        <authorList>
            <consortium name="The MGC Project Team"/>
        </authorList>
    </citation>
    <scope>NUCLEOTIDE SEQUENCE [LARGE SCALE MRNA] (ISOFORM LONG)</scope>
</reference>
<reference key="6">
    <citation type="journal article" date="1993" name="Oncogene">
        <title>A survey of protein tyrosine kinase mRNAs expressed in normal human melanocytes.</title>
        <authorList>
            <person name="Lee S.-T."/>
            <person name="Strunk K.M."/>
            <person name="Spritz R.A."/>
        </authorList>
    </citation>
    <scope>NUCLEOTIDE SEQUENCE [MRNA] OF 674-730</scope>
</reference>
<reference key="7">
    <citation type="journal article" date="1995" name="Int. J. Cancer">
        <title>Receptor tyrosine kinases expressed in metastatic colon cancer.</title>
        <authorList>
            <person name="Craven R.J."/>
            <person name="Xu L.H."/>
            <person name="Weiner T.M."/>
            <person name="Fridell Y.-W."/>
            <person name="Dent G.A."/>
            <person name="Srivastava S."/>
            <person name="Varnum B."/>
            <person name="Liu E.T."/>
            <person name="Cance W.G."/>
        </authorList>
    </citation>
    <scope>NUCLEOTIDE SEQUENCE [MRNA] OF 677-730</scope>
    <scope>SUBCELLULAR LOCATION</scope>
    <scope>TISSUE SPECIFICITY</scope>
    <source>
        <tissue>Colon tumor</tissue>
    </source>
</reference>
<reference key="8">
    <citation type="journal article" date="1995" name="Nature">
        <title>Axl receptor tyrosine kinase stimulated by the vitamin K-dependent protein encoded by growth-arrest-specific gene 6.</title>
        <authorList>
            <person name="Varnum B.C."/>
            <person name="Young C."/>
            <person name="Elliott G."/>
            <person name="Garcia A."/>
            <person name="Bartley T.D."/>
            <person name="Fridell Y.W."/>
            <person name="Hunt R.W."/>
            <person name="Trail G."/>
            <person name="Clogston C."/>
            <person name="Toso R.J."/>
            <person name="Yanagihara D."/>
            <person name="Bennett L."/>
            <person name="Silber M."/>
            <person name="Merewether L.A."/>
            <person name="Tseng A."/>
            <person name="Escobar E."/>
            <person name="Liu E.T."/>
            <person name="Yamane H.K."/>
        </authorList>
    </citation>
    <scope>INTERACTION WITH LIGAND GAS6</scope>
</reference>
<reference key="9">
    <citation type="journal article" date="1996" name="J. Biol. Chem.">
        <title>Characterization of Gas6, a member of the superfamily of G domain-containing proteins, as a ligand for Rse and Axl.</title>
        <authorList>
            <person name="Mark M.R."/>
            <person name="Chen J."/>
            <person name="Hammonds R.G."/>
            <person name="Sadick M."/>
            <person name="Godowski P.J."/>
        </authorList>
    </citation>
    <scope>INTERACTION WITH GAS6</scope>
    <scope>ACTIVITY REGULATION</scope>
</reference>
<reference key="10">
    <citation type="journal article" date="1997" name="Oncogene">
        <title>Intracellular signaling of the Ufo/Axl receptor tyrosine kinase is mediated mainly by a multi-substrate docking-site.</title>
        <authorList>
            <person name="Braunger J."/>
            <person name="Schleithoff L."/>
            <person name="Schulz A.S."/>
            <person name="Kessler H."/>
            <person name="Lammers R."/>
            <person name="Ullrich A."/>
            <person name="Bartram C.R."/>
            <person name="Janssen J.W."/>
        </authorList>
    </citation>
    <scope>PHOSPHORYLATION AT TYR-779; TYR-821 AND TYR-866</scope>
    <scope>INTERACTION WITH GRB2; LCK; PIK3R1; PIK3R2 AND PLCG1</scope>
</reference>
<reference key="11">
    <citation type="journal article" date="1999" name="Cancer Detect. Prev.">
        <title>A receptor tyrosine kinase, UFO/Axl, and other genes isolated by a modified differential display PCR are overexpressed in metastatic prostatic carcinoma cell line DU145.</title>
        <authorList>
            <person name="Jacob A.N."/>
            <person name="Kalapurakal J."/>
            <person name="Davidson W.R."/>
            <person name="Kandpal G."/>
            <person name="Dunson N."/>
            <person name="Prashar Y."/>
            <person name="Kandpal R.P."/>
        </authorList>
    </citation>
    <scope>ROLE IN PROSTATIC CARCINOMA</scope>
</reference>
<reference key="12">
    <citation type="journal article" date="2001" name="Ann. Oncol.">
        <title>Estrogen dependent expression of the receptor tyrosine kinase axl in normal and malignant human breast.</title>
        <authorList>
            <person name="Berclaz G."/>
            <person name="Altermatt H.J."/>
            <person name="Rohrbach V."/>
            <person name="Kieffer I."/>
            <person name="Dreher E."/>
            <person name="Andres A.C."/>
        </authorList>
    </citation>
    <scope>ROLE IN BREAST CANCER</scope>
</reference>
<reference key="13">
    <citation type="journal article" date="2002" name="Biochem. Biophys. Res. Commun.">
        <title>Interaction of Axl receptor tyrosine kinase with C1-TEN, a novel C1 domain-containing protein with homology to tensin.</title>
        <authorList>
            <person name="Hafizi S."/>
            <person name="Alindri F."/>
            <person name="Karlsson R."/>
            <person name="Dahlbaeck B."/>
        </authorList>
    </citation>
    <scope>INTERACTION WITH NCK2; PIK3R3; SOCS1 AND TNS2</scope>
</reference>
<reference key="14">
    <citation type="journal article" date="2002" name="Circ. Res.">
        <title>Acidification prevents endothelial cell apoptosis by Axl activation.</title>
        <authorList>
            <person name="D'Arcangelo D."/>
            <person name="Gaetano C."/>
            <person name="Capogrossi M.C."/>
        </authorList>
    </citation>
    <scope>FUNCTION OF THE GAS6/AXL SIGNALING PATHWAY</scope>
</reference>
<reference key="15">
    <citation type="journal article" date="2002" name="Thyroid">
        <title>Expression of receptor-type tyrosine kinase, Axl, and its ligand, Gas6, in pediatric thyroid carcinomas around Chernobyl.</title>
        <authorList>
            <person name="Ito M."/>
            <person name="Nakashima M."/>
            <person name="Nakayama T."/>
            <person name="Ohtsuru A."/>
            <person name="Nagayama Y."/>
            <person name="Takamura N."/>
            <person name="Demedchik E.P."/>
            <person name="Sekine I."/>
            <person name="Yamashita S."/>
        </authorList>
    </citation>
    <scope>ROLE IN THYROID CARCINOMAS</scope>
</reference>
<reference key="16">
    <citation type="journal article" date="2005" name="Biochem. Biophys. Res. Commun.">
        <title>Effects of Gas6 and hydrogen peroxide in Axl ubiquitination and downregulation.</title>
        <authorList>
            <person name="Valverde P."/>
        </authorList>
    </citation>
    <scope>INTERACTION WITH CBL AND GAS6</scope>
    <scope>UBIQUITINATION</scope>
</reference>
<reference key="17">
    <citation type="journal article" date="2005" name="Blood">
        <title>Inhibition of vascular endothelial growth factor receptor 2-mediated endothelial cell activation by Axl tyrosine kinase receptor.</title>
        <authorList>
            <person name="Gallicchio M."/>
            <person name="Mitola S."/>
            <person name="Valdembri D."/>
            <person name="Fantozzi R."/>
            <person name="Varnum B."/>
            <person name="Avanzi G.C."/>
            <person name="Bussolino F."/>
        </authorList>
    </citation>
    <scope>ACTIVITY REGULATION</scope>
    <scope>FUNCTION</scope>
</reference>
<reference key="18">
    <citation type="journal article" date="2005" name="J. Thromb. Haemost.">
        <title>Gas6 receptors Axl, Sky and Mer enhance platelet activation and regulate thrombotic responses.</title>
        <authorList>
            <person name="Gould W.R."/>
            <person name="Baxi S.M."/>
            <person name="Schroeder R."/>
            <person name="Peng Y.W."/>
            <person name="Leadley R.J."/>
            <person name="Peterson J.T."/>
            <person name="Perrin L.A."/>
        </authorList>
    </citation>
    <scope>FUNCTION IN PLATELET ACTIVATION AND THROMBOTIC RESPONSE REGULATION</scope>
</reference>
<reference key="19">
    <citation type="journal article" date="2006" name="J. Virol.">
        <title>Tyro3 family-mediated cell entry of Ebola and Marburg viruses.</title>
        <authorList>
            <person name="Shimojima M."/>
            <person name="Takada A."/>
            <person name="Ebihara H."/>
            <person name="Neumann G."/>
            <person name="Fujioka K."/>
            <person name="Irimura T."/>
            <person name="Jones S."/>
            <person name="Feldmann H."/>
            <person name="Kawaoka Y."/>
        </authorList>
    </citation>
    <scope>FUNCTION (MICROBIAL INFECTION)</scope>
</reference>
<reference key="20">
    <citation type="journal article" date="2008" name="J. Neurochem.">
        <title>In brain, Axl recruits Grb2 and the p85 regulatory subunit of PI3 kinase; in vitro mutagenesis defines the requisite binding sites for downstream Akt activation.</title>
        <authorList>
            <person name="Weinger J.G."/>
            <person name="Gohari P."/>
            <person name="Yan Y."/>
            <person name="Backer J.M."/>
            <person name="Varnum B."/>
            <person name="Shafit-Zagardo B."/>
        </authorList>
    </citation>
    <scope>INTERACTION WITH GRB2; PIK3R1 AND PIK3R2</scope>
    <scope>PHOSPHORYLATION AT TYR-779; TYR-821 AND TYR-866</scope>
</reference>
<reference key="21">
    <citation type="journal article" date="2008" name="Mol. Cell">
        <title>Kinase-selective enrichment enables quantitative phosphoproteomics of the kinome across the cell cycle.</title>
        <authorList>
            <person name="Daub H."/>
            <person name="Olsen J.V."/>
            <person name="Bairlein M."/>
            <person name="Gnad F."/>
            <person name="Oppermann F.S."/>
            <person name="Korner R."/>
            <person name="Greff Z."/>
            <person name="Keri G."/>
            <person name="Stemmann O."/>
            <person name="Mann M."/>
        </authorList>
    </citation>
    <scope>PHOSPHORYLATION [LARGE SCALE ANALYSIS] AT SER-884</scope>
    <scope>IDENTIFICATION BY MASS SPECTROMETRY [LARGE SCALE ANALYSIS]</scope>
    <source>
        <tissue>Cervix carcinoma</tissue>
    </source>
</reference>
<reference key="22">
    <citation type="journal article" date="2009" name="Blood">
        <title>The Axl/Gas6 pathway is required for optimal cytokine signaling during human natural killer cell development.</title>
        <authorList>
            <person name="Park I.K."/>
            <person name="Giovenzana C."/>
            <person name="Hughes T.L."/>
            <person name="Yu J."/>
            <person name="Trotta R."/>
            <person name="Caligiuri M.A."/>
        </authorList>
    </citation>
    <scope>FUNCTION OF THE GAS6/AXL SIGNALING PATHWAY</scope>
</reference>
<reference key="23">
    <citation type="journal article" date="2009" name="J. Biol. Chem.">
        <title>Cytoplasmic ACK1 interaction with multiple receptor tyrosine kinases is mediated by Grb2: an analysis of ACK1 effects on Axl signaling.</title>
        <authorList>
            <person name="Pao-Chun L."/>
            <person name="Chan P.M."/>
            <person name="Chan W."/>
            <person name="Manser E."/>
        </authorList>
    </citation>
    <scope>INTERACTION WITH GRB2 AND TNK2</scope>
</reference>
<reference key="24">
    <citation type="journal article" date="2011" name="Cell Host Microbe">
        <title>The soluble serum protein Gas6 bridges virion envelope phosphatidylserine to the TAM receptor tyrosine kinase Axl to mediate viral entry.</title>
        <authorList>
            <person name="Morizono K."/>
            <person name="Xie Y."/>
            <person name="Olafsen T."/>
            <person name="Lee B."/>
            <person name="Dasgupta A."/>
            <person name="Wu A.M."/>
            <person name="Chen I.S."/>
        </authorList>
    </citation>
    <scope>FUNCTION (MICROBIAL INFECTION)</scope>
</reference>
<reference key="25">
    <citation type="journal article" date="2012" name="J. Virol.">
        <title>Identification of cell surface molecules involved in dystroglycan-independent Lassa virus cell entry.</title>
        <authorList>
            <person name="Shimojima M."/>
            <person name="Stroher U."/>
            <person name="Ebihara H."/>
            <person name="Feldmann H."/>
            <person name="Kawaoka Y."/>
        </authorList>
    </citation>
    <scope>FUNCTION (MICROBIAL INFECTION)</scope>
</reference>
<reference key="26">
    <citation type="journal article" date="2012" name="J. Vet. Med. Sci.">
        <title>Cell surface molecules involved in infection mediated by lymphocytic choriomeningitis virus glycoprotein.</title>
        <authorList>
            <person name="Shimojima M."/>
            <person name="Kawaoka Y."/>
        </authorList>
    </citation>
    <scope>FUNCTION (MICROBIAL INFECTION)</scope>
</reference>
<reference key="27">
    <citation type="journal article" date="2014" name="Virology">
        <title>Phosphatidylserine receptors: enhancers of enveloped virus entry and infection.</title>
        <authorList>
            <person name="Moller-Tank S."/>
            <person name="Maury W."/>
        </authorList>
    </citation>
    <scope>FUNCTION (MICROBIAL INFECTION)</scope>
    <scope>REVIEW</scope>
</reference>
<reference key="28">
    <citation type="journal article" date="2017" name="Cell Rep.">
        <title>Axl Mediates ZIKA Virus Entry in Human Glial Cells and Modulates Innate Immune Responses.</title>
        <authorList>
            <person name="Meertens L."/>
            <person name="Labeau A."/>
            <person name="Dejarnac O."/>
            <person name="Cipriani S."/>
            <person name="Sinigaglia L."/>
            <person name="Bonnet-Madin L."/>
            <person name="Le Charpentier T."/>
            <person name="Hafirassou M.L."/>
            <person name="Zamborlini A."/>
            <person name="Cao-Lormeau V.M."/>
            <person name="Coulpier M."/>
            <person name="Misse D."/>
            <person name="Jouvenet N."/>
            <person name="Tabibiazar R."/>
            <person name="Gressens P."/>
            <person name="Schwartz O."/>
            <person name="Amara A."/>
        </authorList>
    </citation>
    <scope>FUNCTION (MICROBIAL INFECTION)</scope>
    <scope>MUTAGENESIS OF LYS-567</scope>
    <scope>CATALYTIC ACTIVITY</scope>
    <scope>SUBCELLULAR LOCATION</scope>
</reference>
<reference key="29">
    <citation type="journal article" date="2018" name="Nat. Immunol.">
        <title>Salivary factor LTRIN from Aedes aegypti facilitates the transmission of Zika virus by interfering with the lymphotoxin-beta receptor.</title>
        <authorList>
            <person name="Jin L."/>
            <person name="Guo X."/>
            <person name="Shen C."/>
            <person name="Hao X."/>
            <person name="Sun P."/>
            <person name="Li P."/>
            <person name="Xu T."/>
            <person name="Hu C."/>
            <person name="Rose O."/>
            <person name="Zhou H."/>
            <person name="Yang M."/>
            <person name="Qin C.F."/>
            <person name="Guo J."/>
            <person name="Peng H."/>
            <person name="Zhu M."/>
            <person name="Cheng G."/>
            <person name="Qi X."/>
            <person name="Lai R."/>
        </authorList>
    </citation>
    <scope>INDUCTION BY MOSQUITO LYMPHOTOXIN BETA RECEPTOR INHIBITOR DURING ZIKA VIRUS INFECTION (MICROBIAL INFECTION)</scope>
</reference>
<reference key="30">
    <citation type="journal article" date="2018" name="Nat. Microbiol.">
        <title>AXL promotes Zika virus infection in astrocytes by antagonizing type I interferon signalling.</title>
        <authorList>
            <person name="Chen J."/>
            <person name="Yang Y.F."/>
            <person name="Yang Y."/>
            <person name="Zou P."/>
            <person name="Chen J."/>
            <person name="He Y."/>
            <person name="Shui S.L."/>
            <person name="Cui Y.R."/>
            <person name="Bai R."/>
            <person name="Liang Y.J."/>
            <person name="Hu Y."/>
            <person name="Jiang B."/>
            <person name="Lu L."/>
            <person name="Zhang X."/>
            <person name="Liu J."/>
            <person name="Xu J."/>
        </authorList>
    </citation>
    <scope>FUNCTION (MICROBIAL INFECTION)</scope>
    <scope>SUBCELLULAR LOCATION</scope>
</reference>
<reference key="31">
    <citation type="journal article" date="2019" name="MBio">
        <title>Axl Promotes Zika Virus Entry and Modulates the Antiviral State of Human Sertoli Cells.</title>
        <authorList>
            <person name="Strange D.P."/>
            <person name="Jiyarom B."/>
            <person name="Pourhabibi Zarandi N."/>
            <person name="Xie X."/>
            <person name="Baker C."/>
            <person name="Sadri-Ardekani H."/>
            <person name="Shi P.Y."/>
            <person name="Verma S."/>
        </authorList>
    </citation>
    <scope>FUNCTION (MICROBIAL INFECTION)</scope>
</reference>
<reference key="32">
    <citation type="journal article" date="2006" name="EMBO J.">
        <title>Structural basis for Gas6-Axl signalling.</title>
        <authorList>
            <person name="Sasaki T."/>
            <person name="Knyazev P.G."/>
            <person name="Clout N.J."/>
            <person name="Cheburkin Y."/>
            <person name="Goehring W."/>
            <person name="Ullrich A."/>
            <person name="Timpl R."/>
            <person name="Hohenester E."/>
        </authorList>
    </citation>
    <scope>X-RAY CRYSTALLOGRAPHY (3.3 ANGSTROMS) OF 33-227 IN COMPLEX WITH GAS6</scope>
    <scope>MUTAGENESIS OF GLU-63; GLU-66 AND THR-84</scope>
    <scope>SUBUNIT</scope>
</reference>
<reference key="33">
    <citation type="journal article" date="2007" name="Nature">
        <title>Patterns of somatic mutation in human cancer genomes.</title>
        <authorList>
            <person name="Greenman C."/>
            <person name="Stephens P."/>
            <person name="Smith R."/>
            <person name="Dalgliesh G.L."/>
            <person name="Hunter C."/>
            <person name="Bignell G."/>
            <person name="Davies H."/>
            <person name="Teague J."/>
            <person name="Butler A."/>
            <person name="Stevens C."/>
            <person name="Edkins S."/>
            <person name="O'Meara S."/>
            <person name="Vastrik I."/>
            <person name="Schmidt E.E."/>
            <person name="Avis T."/>
            <person name="Barthorpe S."/>
            <person name="Bhamra G."/>
            <person name="Buck G."/>
            <person name="Choudhury B."/>
            <person name="Clements J."/>
            <person name="Cole J."/>
            <person name="Dicks E."/>
            <person name="Forbes S."/>
            <person name="Gray K."/>
            <person name="Halliday K."/>
            <person name="Harrison R."/>
            <person name="Hills K."/>
            <person name="Hinton J."/>
            <person name="Jenkinson A."/>
            <person name="Jones D."/>
            <person name="Menzies A."/>
            <person name="Mironenko T."/>
            <person name="Perry J."/>
            <person name="Raine K."/>
            <person name="Richardson D."/>
            <person name="Shepherd R."/>
            <person name="Small A."/>
            <person name="Tofts C."/>
            <person name="Varian J."/>
            <person name="Webb T."/>
            <person name="West S."/>
            <person name="Widaa S."/>
            <person name="Yates A."/>
            <person name="Cahill D.P."/>
            <person name="Louis D.N."/>
            <person name="Goldstraw P."/>
            <person name="Nicholson A.G."/>
            <person name="Brasseur F."/>
            <person name="Looijenga L."/>
            <person name="Weber B.L."/>
            <person name="Chiew Y.-E."/>
            <person name="DeFazio A."/>
            <person name="Greaves M.F."/>
            <person name="Green A.R."/>
            <person name="Campbell P."/>
            <person name="Birney E."/>
            <person name="Easton D.F."/>
            <person name="Chenevix-Trench G."/>
            <person name="Tan M.-H."/>
            <person name="Khoo S.K."/>
            <person name="Teh B.T."/>
            <person name="Yuen S.T."/>
            <person name="Leung S.Y."/>
            <person name="Wooster R."/>
            <person name="Futreal P.A."/>
            <person name="Stratton M.R."/>
        </authorList>
    </citation>
    <scope>VARIANTS [LARGE SCALE ANALYSIS] MET-112; TRP-295; CYS-499 AND GLY-515</scope>
</reference>
<dbReference type="EC" id="2.7.10.1" evidence="27"/>
<dbReference type="EMBL" id="M76125">
    <property type="protein sequence ID" value="AAA61243.1"/>
    <property type="molecule type" value="mRNA"/>
</dbReference>
<dbReference type="EMBL" id="S65125">
    <property type="protein sequence ID" value="AAB20305.1"/>
    <property type="molecule type" value="mRNA"/>
</dbReference>
<dbReference type="EMBL" id="X57019">
    <property type="protein sequence ID" value="CAA40338.1"/>
    <property type="molecule type" value="mRNA"/>
</dbReference>
<dbReference type="EMBL" id="AC011510">
    <property type="status" value="NOT_ANNOTATED_CDS"/>
    <property type="molecule type" value="Genomic_DNA"/>
</dbReference>
<dbReference type="EMBL" id="BC032229">
    <property type="protein sequence ID" value="AAH32229.1"/>
    <property type="molecule type" value="mRNA"/>
</dbReference>
<dbReference type="CCDS" id="CCDS12574.1">
    <molecule id="P30530-2"/>
</dbReference>
<dbReference type="CCDS" id="CCDS12575.1">
    <molecule id="P30530-1"/>
</dbReference>
<dbReference type="PIR" id="A41527">
    <property type="entry name" value="A41527"/>
</dbReference>
<dbReference type="RefSeq" id="NP_001690.2">
    <molecule id="P30530-2"/>
    <property type="nucleotide sequence ID" value="NM_001699.5"/>
</dbReference>
<dbReference type="RefSeq" id="NP_068713.2">
    <molecule id="P30530-1"/>
    <property type="nucleotide sequence ID" value="NM_021913.4"/>
</dbReference>
<dbReference type="PDB" id="2C5D">
    <property type="method" value="X-ray"/>
    <property type="resolution" value="3.30 A"/>
    <property type="chains" value="C/D=33-227"/>
</dbReference>
<dbReference type="PDB" id="4RA0">
    <property type="method" value="X-ray"/>
    <property type="resolution" value="3.07 A"/>
    <property type="chains" value="C/D=33-227"/>
</dbReference>
<dbReference type="PDB" id="5U6B">
    <property type="method" value="X-ray"/>
    <property type="resolution" value="2.84 A"/>
    <property type="chains" value="A/B/C/D=514-818"/>
</dbReference>
<dbReference type="PDB" id="5VXZ">
    <property type="method" value="X-ray"/>
    <property type="resolution" value="2.30 A"/>
    <property type="chains" value="C/D=34-135"/>
</dbReference>
<dbReference type="PDBsum" id="2C5D"/>
<dbReference type="PDBsum" id="4RA0"/>
<dbReference type="PDBsum" id="5U6B"/>
<dbReference type="PDBsum" id="5VXZ"/>
<dbReference type="SMR" id="P30530"/>
<dbReference type="BioGRID" id="107036">
    <property type="interactions" value="402"/>
</dbReference>
<dbReference type="CORUM" id="P30530"/>
<dbReference type="FunCoup" id="P30530">
    <property type="interactions" value="354"/>
</dbReference>
<dbReference type="IntAct" id="P30530">
    <property type="interactions" value="281"/>
</dbReference>
<dbReference type="MINT" id="P30530"/>
<dbReference type="STRING" id="9606.ENSP00000301178"/>
<dbReference type="BindingDB" id="P30530"/>
<dbReference type="ChEMBL" id="CHEMBL4895"/>
<dbReference type="DrugBank" id="DB12411">
    <property type="generic name" value="Bemcentinib"/>
</dbReference>
<dbReference type="DrugBank" id="DB15187">
    <property type="generic name" value="Dubermatinib"/>
</dbReference>
<dbReference type="DrugBank" id="DB12010">
    <property type="generic name" value="Fostamatinib"/>
</dbReference>
<dbReference type="DrugBank" id="DB12141">
    <property type="generic name" value="Gilteritinib"/>
</dbReference>
<dbReference type="DrugBank" id="DB19201">
    <property type="generic name" value="Tamnorzatinib"/>
</dbReference>
<dbReference type="DrugCentral" id="P30530"/>
<dbReference type="GuidetoPHARMACOLOGY" id="1835"/>
<dbReference type="GlyConnect" id="1983">
    <property type="glycosylation" value="12 N-Linked glycans (4 sites)"/>
</dbReference>
<dbReference type="GlyCosmos" id="P30530">
    <property type="glycosylation" value="8 sites, 12 glycans"/>
</dbReference>
<dbReference type="GlyGen" id="P30530">
    <property type="glycosylation" value="10 sites, 13 N-linked glycans (4 sites), 1 O-linked glycan (2 sites)"/>
</dbReference>
<dbReference type="iPTMnet" id="P30530"/>
<dbReference type="PhosphoSitePlus" id="P30530"/>
<dbReference type="BioMuta" id="AXL"/>
<dbReference type="DMDM" id="239938818"/>
<dbReference type="CPTAC" id="CPTAC-1766"/>
<dbReference type="CPTAC" id="CPTAC-2791"/>
<dbReference type="jPOST" id="P30530"/>
<dbReference type="MassIVE" id="P30530"/>
<dbReference type="PaxDb" id="9606-ENSP00000301178"/>
<dbReference type="PeptideAtlas" id="P30530"/>
<dbReference type="ProteomicsDB" id="54712">
    <molecule id="P30530-1"/>
</dbReference>
<dbReference type="ProteomicsDB" id="54713">
    <molecule id="P30530-2"/>
</dbReference>
<dbReference type="Pumba" id="P30530"/>
<dbReference type="ABCD" id="P30530">
    <property type="antibodies" value="23 sequenced antibodies"/>
</dbReference>
<dbReference type="Antibodypedia" id="30709">
    <property type="antibodies" value="1296 antibodies from 45 providers"/>
</dbReference>
<dbReference type="CPTC" id="P30530">
    <property type="antibodies" value="2 antibodies"/>
</dbReference>
<dbReference type="DNASU" id="558"/>
<dbReference type="Ensembl" id="ENST00000301178.9">
    <molecule id="P30530-1"/>
    <property type="protein sequence ID" value="ENSP00000301178.3"/>
    <property type="gene ID" value="ENSG00000167601.12"/>
</dbReference>
<dbReference type="Ensembl" id="ENST00000359092.7">
    <molecule id="P30530-2"/>
    <property type="protein sequence ID" value="ENSP00000351995.2"/>
    <property type="gene ID" value="ENSG00000167601.12"/>
</dbReference>
<dbReference type="GeneID" id="558"/>
<dbReference type="KEGG" id="hsa:558"/>
<dbReference type="MANE-Select" id="ENST00000301178.9">
    <property type="protein sequence ID" value="ENSP00000301178.3"/>
    <property type="RefSeq nucleotide sequence ID" value="NM_021913.5"/>
    <property type="RefSeq protein sequence ID" value="NP_068713.2"/>
</dbReference>
<dbReference type="UCSC" id="uc010ehj.5">
    <molecule id="P30530-1"/>
    <property type="organism name" value="human"/>
</dbReference>
<dbReference type="AGR" id="HGNC:905"/>
<dbReference type="CTD" id="558"/>
<dbReference type="DisGeNET" id="558"/>
<dbReference type="GeneCards" id="AXL"/>
<dbReference type="GeneReviews" id="AXL"/>
<dbReference type="HGNC" id="HGNC:905">
    <property type="gene designation" value="AXL"/>
</dbReference>
<dbReference type="HPA" id="ENSG00000167601">
    <property type="expression patterns" value="Low tissue specificity"/>
</dbReference>
<dbReference type="MalaCards" id="AXL"/>
<dbReference type="MIM" id="109135">
    <property type="type" value="gene"/>
</dbReference>
<dbReference type="neXtProt" id="NX_P30530"/>
<dbReference type="OpenTargets" id="ENSG00000167601"/>
<dbReference type="PharmGKB" id="PA25197"/>
<dbReference type="VEuPathDB" id="HostDB:ENSG00000167601"/>
<dbReference type="eggNOG" id="ENOG502QQQ3">
    <property type="taxonomic scope" value="Eukaryota"/>
</dbReference>
<dbReference type="GeneTree" id="ENSGT00940000160232"/>
<dbReference type="InParanoid" id="P30530"/>
<dbReference type="OMA" id="WTIMSTL"/>
<dbReference type="OrthoDB" id="4062651at2759"/>
<dbReference type="PAN-GO" id="P30530">
    <property type="GO annotations" value="13 GO annotations based on evolutionary models"/>
</dbReference>
<dbReference type="PhylomeDB" id="P30530"/>
<dbReference type="TreeFam" id="TF317402"/>
<dbReference type="BRENDA" id="2.7.10.1">
    <property type="organism ID" value="2681"/>
</dbReference>
<dbReference type="PathwayCommons" id="P30530"/>
<dbReference type="Reactome" id="R-HSA-4420097">
    <property type="pathway name" value="VEGFA-VEGFR2 Pathway"/>
</dbReference>
<dbReference type="SignaLink" id="P30530"/>
<dbReference type="SIGNOR" id="P30530"/>
<dbReference type="BioGRID-ORCS" id="558">
    <property type="hits" value="17 hits in 1198 CRISPR screens"/>
</dbReference>
<dbReference type="ChiTaRS" id="AXL">
    <property type="organism name" value="human"/>
</dbReference>
<dbReference type="EvolutionaryTrace" id="P30530"/>
<dbReference type="GeneWiki" id="AXL_receptor_tyrosine_kinase"/>
<dbReference type="GenomeRNAi" id="558"/>
<dbReference type="Pharos" id="P30530">
    <property type="development level" value="Tchem"/>
</dbReference>
<dbReference type="PRO" id="PR:P30530"/>
<dbReference type="Proteomes" id="UP000005640">
    <property type="component" value="Chromosome 19"/>
</dbReference>
<dbReference type="RNAct" id="P30530">
    <property type="molecule type" value="protein"/>
</dbReference>
<dbReference type="Bgee" id="ENSG00000167601">
    <property type="expression patterns" value="Expressed in synovial joint and 206 other cell types or tissues"/>
</dbReference>
<dbReference type="ExpressionAtlas" id="P30530">
    <property type="expression patterns" value="baseline and differential"/>
</dbReference>
<dbReference type="GO" id="GO:0015629">
    <property type="term" value="C:actin cytoskeleton"/>
    <property type="evidence" value="ECO:0000314"/>
    <property type="project" value="HPA"/>
</dbReference>
<dbReference type="GO" id="GO:0009986">
    <property type="term" value="C:cell surface"/>
    <property type="evidence" value="ECO:0000314"/>
    <property type="project" value="UniProtKB"/>
</dbReference>
<dbReference type="GO" id="GO:0070062">
    <property type="term" value="C:extracellular exosome"/>
    <property type="evidence" value="ECO:0007005"/>
    <property type="project" value="UniProtKB"/>
</dbReference>
<dbReference type="GO" id="GO:0005615">
    <property type="term" value="C:extracellular space"/>
    <property type="evidence" value="ECO:0000314"/>
    <property type="project" value="UniProtKB"/>
</dbReference>
<dbReference type="GO" id="GO:0043231">
    <property type="term" value="C:intracellular membrane-bounded organelle"/>
    <property type="evidence" value="ECO:0000314"/>
    <property type="project" value="HPA"/>
</dbReference>
<dbReference type="GO" id="GO:0005886">
    <property type="term" value="C:plasma membrane"/>
    <property type="evidence" value="ECO:0000314"/>
    <property type="project" value="HPA"/>
</dbReference>
<dbReference type="GO" id="GO:0043235">
    <property type="term" value="C:receptor complex"/>
    <property type="evidence" value="ECO:0000318"/>
    <property type="project" value="GO_Central"/>
</dbReference>
<dbReference type="GO" id="GO:0005524">
    <property type="term" value="F:ATP binding"/>
    <property type="evidence" value="ECO:0007669"/>
    <property type="project" value="UniProtKB-KW"/>
</dbReference>
<dbReference type="GO" id="GO:0001786">
    <property type="term" value="F:phosphatidylserine binding"/>
    <property type="evidence" value="ECO:0000314"/>
    <property type="project" value="UniProtKB"/>
</dbReference>
<dbReference type="GO" id="GO:0004713">
    <property type="term" value="F:protein tyrosine kinase activity"/>
    <property type="evidence" value="ECO:0000269"/>
    <property type="project" value="Reactome"/>
</dbReference>
<dbReference type="GO" id="GO:0004714">
    <property type="term" value="F:transmembrane receptor protein tyrosine kinase activity"/>
    <property type="evidence" value="ECO:0000318"/>
    <property type="project" value="GO_Central"/>
</dbReference>
<dbReference type="GO" id="GO:0001618">
    <property type="term" value="F:virus receptor activity"/>
    <property type="evidence" value="ECO:0000314"/>
    <property type="project" value="FlyBase"/>
</dbReference>
<dbReference type="GO" id="GO:0001974">
    <property type="term" value="P:blood vessel remodeling"/>
    <property type="evidence" value="ECO:0007669"/>
    <property type="project" value="Ensembl"/>
</dbReference>
<dbReference type="GO" id="GO:0048469">
    <property type="term" value="P:cell maturation"/>
    <property type="evidence" value="ECO:0000270"/>
    <property type="project" value="UniProtKB"/>
</dbReference>
<dbReference type="GO" id="GO:0016477">
    <property type="term" value="P:cell migration"/>
    <property type="evidence" value="ECO:0000318"/>
    <property type="project" value="GO_Central"/>
</dbReference>
<dbReference type="GO" id="GO:0007169">
    <property type="term" value="P:cell surface receptor protein tyrosine kinase signaling pathway"/>
    <property type="evidence" value="ECO:0000318"/>
    <property type="project" value="GO_Central"/>
</dbReference>
<dbReference type="GO" id="GO:0035457">
    <property type="term" value="P:cellular response to interferon-alpha"/>
    <property type="evidence" value="ECO:0000314"/>
    <property type="project" value="UniProtKB"/>
</dbReference>
<dbReference type="GO" id="GO:0071222">
    <property type="term" value="P:cellular response to lipopolysaccharide"/>
    <property type="evidence" value="ECO:0000314"/>
    <property type="project" value="UniProtKB"/>
</dbReference>
<dbReference type="GO" id="GO:0097028">
    <property type="term" value="P:dendritic cell differentiation"/>
    <property type="evidence" value="ECO:0000270"/>
    <property type="project" value="UniProtKB"/>
</dbReference>
<dbReference type="GO" id="GO:0034101">
    <property type="term" value="P:erythrocyte homeostasis"/>
    <property type="evidence" value="ECO:0007669"/>
    <property type="project" value="Ensembl"/>
</dbReference>
<dbReference type="GO" id="GO:0051649">
    <property type="term" value="P:establishment of localization in cell"/>
    <property type="evidence" value="ECO:0007669"/>
    <property type="project" value="Ensembl"/>
</dbReference>
<dbReference type="GO" id="GO:0021885">
    <property type="term" value="P:forebrain cell migration"/>
    <property type="evidence" value="ECO:0007669"/>
    <property type="project" value="Ensembl"/>
</dbReference>
<dbReference type="GO" id="GO:0006954">
    <property type="term" value="P:inflammatory response"/>
    <property type="evidence" value="ECO:0007669"/>
    <property type="project" value="Ensembl"/>
</dbReference>
<dbReference type="GO" id="GO:0045087">
    <property type="term" value="P:innate immune response"/>
    <property type="evidence" value="ECO:0007669"/>
    <property type="project" value="UniProtKB-KW"/>
</dbReference>
<dbReference type="GO" id="GO:0001779">
    <property type="term" value="P:natural killer cell differentiation"/>
    <property type="evidence" value="ECO:0000318"/>
    <property type="project" value="GO_Central"/>
</dbReference>
<dbReference type="GO" id="GO:0043066">
    <property type="term" value="P:negative regulation of apoptotic process"/>
    <property type="evidence" value="ECO:0000318"/>
    <property type="project" value="GO_Central"/>
</dbReference>
<dbReference type="GO" id="GO:2000669">
    <property type="term" value="P:negative regulation of dendritic cell apoptotic process"/>
    <property type="evidence" value="ECO:0000314"/>
    <property type="project" value="UniProtKB"/>
</dbReference>
<dbReference type="GO" id="GO:0051250">
    <property type="term" value="P:negative regulation of lymphocyte activation"/>
    <property type="evidence" value="ECO:0007669"/>
    <property type="project" value="Ensembl"/>
</dbReference>
<dbReference type="GO" id="GO:0010936">
    <property type="term" value="P:negative regulation of macrophage cytokine production"/>
    <property type="evidence" value="ECO:0007669"/>
    <property type="project" value="Ensembl"/>
</dbReference>
<dbReference type="GO" id="GO:0043524">
    <property type="term" value="P:negative regulation of neuron apoptotic process"/>
    <property type="evidence" value="ECO:0007669"/>
    <property type="project" value="Ensembl"/>
</dbReference>
<dbReference type="GO" id="GO:0032720">
    <property type="term" value="P:negative regulation of tumor necrosis factor production"/>
    <property type="evidence" value="ECO:0007669"/>
    <property type="project" value="Ensembl"/>
</dbReference>
<dbReference type="GO" id="GO:0032689">
    <property type="term" value="P:negative regulation of type II interferon production"/>
    <property type="evidence" value="ECO:0000314"/>
    <property type="project" value="UniProtKB"/>
</dbReference>
<dbReference type="GO" id="GO:0007399">
    <property type="term" value="P:nervous system development"/>
    <property type="evidence" value="ECO:0000318"/>
    <property type="project" value="GO_Central"/>
</dbReference>
<dbReference type="GO" id="GO:0051402">
    <property type="term" value="P:neuron apoptotic process"/>
    <property type="evidence" value="ECO:0007669"/>
    <property type="project" value="Ensembl"/>
</dbReference>
<dbReference type="GO" id="GO:0001764">
    <property type="term" value="P:neuron migration"/>
    <property type="evidence" value="ECO:0007669"/>
    <property type="project" value="Ensembl"/>
</dbReference>
<dbReference type="GO" id="GO:0097350">
    <property type="term" value="P:neutrophil clearance"/>
    <property type="evidence" value="ECO:0007669"/>
    <property type="project" value="Ensembl"/>
</dbReference>
<dbReference type="GO" id="GO:0042698">
    <property type="term" value="P:ovulation cycle"/>
    <property type="evidence" value="ECO:0007669"/>
    <property type="project" value="Ensembl"/>
</dbReference>
<dbReference type="GO" id="GO:0006909">
    <property type="term" value="P:phagocytosis"/>
    <property type="evidence" value="ECO:0000314"/>
    <property type="project" value="UniProtKB"/>
</dbReference>
<dbReference type="GO" id="GO:0030168">
    <property type="term" value="P:platelet activation"/>
    <property type="evidence" value="ECO:0000318"/>
    <property type="project" value="GO_Central"/>
</dbReference>
<dbReference type="GO" id="GO:0001961">
    <property type="term" value="P:positive regulation of cytokine-mediated signaling pathway"/>
    <property type="evidence" value="ECO:0000314"/>
    <property type="project" value="UniProtKB"/>
</dbReference>
<dbReference type="GO" id="GO:0032825">
    <property type="term" value="P:positive regulation of natural killer cell differentiation"/>
    <property type="evidence" value="ECO:0000314"/>
    <property type="project" value="UniProtKB"/>
</dbReference>
<dbReference type="GO" id="GO:0051897">
    <property type="term" value="P:positive regulation of phosphatidylinositol 3-kinase/protein kinase B signal transduction"/>
    <property type="evidence" value="ECO:0000318"/>
    <property type="project" value="GO_Central"/>
</dbReference>
<dbReference type="GO" id="GO:0048549">
    <property type="term" value="P:positive regulation of pinocytosis"/>
    <property type="evidence" value="ECO:0000315"/>
    <property type="project" value="CACAO"/>
</dbReference>
<dbReference type="GO" id="GO:1903902">
    <property type="term" value="P:positive regulation of viral life cycle"/>
    <property type="evidence" value="ECO:0000315"/>
    <property type="project" value="FlyBase"/>
</dbReference>
<dbReference type="GO" id="GO:0032940">
    <property type="term" value="P:secretion by cell"/>
    <property type="evidence" value="ECO:0007669"/>
    <property type="project" value="Ensembl"/>
</dbReference>
<dbReference type="GO" id="GO:0007165">
    <property type="term" value="P:signal transduction"/>
    <property type="evidence" value="ECO:0000304"/>
    <property type="project" value="ProtInc"/>
</dbReference>
<dbReference type="GO" id="GO:0007283">
    <property type="term" value="P:spermatogenesis"/>
    <property type="evidence" value="ECO:0007669"/>
    <property type="project" value="Ensembl"/>
</dbReference>
<dbReference type="GO" id="GO:0034446">
    <property type="term" value="P:substrate adhesion-dependent cell spreading"/>
    <property type="evidence" value="ECO:0007669"/>
    <property type="project" value="Ensembl"/>
</dbReference>
<dbReference type="GO" id="GO:0046718">
    <property type="term" value="P:symbiont entry into host cell"/>
    <property type="evidence" value="ECO:0000315"/>
    <property type="project" value="CACAO"/>
</dbReference>
<dbReference type="GO" id="GO:0060068">
    <property type="term" value="P:vagina development"/>
    <property type="evidence" value="ECO:0007669"/>
    <property type="project" value="Ensembl"/>
</dbReference>
<dbReference type="GO" id="GO:0048010">
    <property type="term" value="P:vascular endothelial growth factor receptor signaling pathway"/>
    <property type="evidence" value="ECO:0000304"/>
    <property type="project" value="Reactome"/>
</dbReference>
<dbReference type="CDD" id="cd00063">
    <property type="entry name" value="FN3"/>
    <property type="match status" value="2"/>
</dbReference>
<dbReference type="CDD" id="cd20966">
    <property type="entry name" value="IgI_1_Axl_like"/>
    <property type="match status" value="1"/>
</dbReference>
<dbReference type="CDD" id="cd05749">
    <property type="entry name" value="IgI_2_Axl_Tyro3_like"/>
    <property type="match status" value="1"/>
</dbReference>
<dbReference type="CDD" id="cd05075">
    <property type="entry name" value="PTKc_Axl"/>
    <property type="match status" value="1"/>
</dbReference>
<dbReference type="FunFam" id="2.60.40.10:FF:000865">
    <property type="entry name" value="AXL receptor tyrosine kinase"/>
    <property type="match status" value="1"/>
</dbReference>
<dbReference type="FunFam" id="1.10.510.10:FF:000089">
    <property type="entry name" value="Tyrosine-protein kinase receptor TYRO3"/>
    <property type="match status" value="1"/>
</dbReference>
<dbReference type="FunFam" id="2.60.40.10:FF:000662">
    <property type="entry name" value="Tyrosine-protein kinase receptor UFO"/>
    <property type="match status" value="1"/>
</dbReference>
<dbReference type="FunFam" id="2.60.40.10:FF:000810">
    <property type="entry name" value="Tyrosine-protein kinase receptor UFO"/>
    <property type="match status" value="1"/>
</dbReference>
<dbReference type="FunFam" id="3.30.200.20:FF:000509">
    <property type="entry name" value="Tyrosine-protein kinase receptor UFO"/>
    <property type="match status" value="1"/>
</dbReference>
<dbReference type="FunFam" id="2.60.40.10:FF:000696">
    <property type="entry name" value="tyrosine-protein kinase receptor UFO isoform X1"/>
    <property type="match status" value="1"/>
</dbReference>
<dbReference type="Gene3D" id="2.60.40.10">
    <property type="entry name" value="Immunoglobulins"/>
    <property type="match status" value="4"/>
</dbReference>
<dbReference type="Gene3D" id="3.30.200.20">
    <property type="entry name" value="Phosphorylase Kinase, domain 1"/>
    <property type="match status" value="1"/>
</dbReference>
<dbReference type="Gene3D" id="1.10.510.10">
    <property type="entry name" value="Transferase(Phosphotransferase) domain 1"/>
    <property type="match status" value="1"/>
</dbReference>
<dbReference type="InterPro" id="IPR003961">
    <property type="entry name" value="FN3_dom"/>
</dbReference>
<dbReference type="InterPro" id="IPR036116">
    <property type="entry name" value="FN3_sf"/>
</dbReference>
<dbReference type="InterPro" id="IPR007110">
    <property type="entry name" value="Ig-like_dom"/>
</dbReference>
<dbReference type="InterPro" id="IPR036179">
    <property type="entry name" value="Ig-like_dom_sf"/>
</dbReference>
<dbReference type="InterPro" id="IPR013783">
    <property type="entry name" value="Ig-like_fold"/>
</dbReference>
<dbReference type="InterPro" id="IPR003599">
    <property type="entry name" value="Ig_sub"/>
</dbReference>
<dbReference type="InterPro" id="IPR011009">
    <property type="entry name" value="Kinase-like_dom_sf"/>
</dbReference>
<dbReference type="InterPro" id="IPR000719">
    <property type="entry name" value="Prot_kinase_dom"/>
</dbReference>
<dbReference type="InterPro" id="IPR017441">
    <property type="entry name" value="Protein_kinase_ATP_BS"/>
</dbReference>
<dbReference type="InterPro" id="IPR050122">
    <property type="entry name" value="RTK"/>
</dbReference>
<dbReference type="InterPro" id="IPR001245">
    <property type="entry name" value="Ser-Thr/Tyr_kinase_cat_dom"/>
</dbReference>
<dbReference type="InterPro" id="IPR008266">
    <property type="entry name" value="Tyr_kinase_AS"/>
</dbReference>
<dbReference type="InterPro" id="IPR020635">
    <property type="entry name" value="Tyr_kinase_cat_dom"/>
</dbReference>
<dbReference type="PANTHER" id="PTHR24416">
    <property type="entry name" value="TYROSINE-PROTEIN KINASE RECEPTOR"/>
    <property type="match status" value="1"/>
</dbReference>
<dbReference type="PANTHER" id="PTHR24416:SF323">
    <property type="entry name" value="TYROSINE-PROTEIN KINASE RECEPTOR UFO"/>
    <property type="match status" value="1"/>
</dbReference>
<dbReference type="Pfam" id="PF00041">
    <property type="entry name" value="fn3"/>
    <property type="match status" value="2"/>
</dbReference>
<dbReference type="Pfam" id="PF13927">
    <property type="entry name" value="Ig_3"/>
    <property type="match status" value="1"/>
</dbReference>
<dbReference type="Pfam" id="PF07714">
    <property type="entry name" value="PK_Tyr_Ser-Thr"/>
    <property type="match status" value="1"/>
</dbReference>
<dbReference type="PIRSF" id="PIRSF000615">
    <property type="entry name" value="TyrPK_CSF1-R"/>
    <property type="match status" value="1"/>
</dbReference>
<dbReference type="PRINTS" id="PR00109">
    <property type="entry name" value="TYRKINASE"/>
</dbReference>
<dbReference type="SMART" id="SM00060">
    <property type="entry name" value="FN3"/>
    <property type="match status" value="2"/>
</dbReference>
<dbReference type="SMART" id="SM00409">
    <property type="entry name" value="IG"/>
    <property type="match status" value="2"/>
</dbReference>
<dbReference type="SMART" id="SM00219">
    <property type="entry name" value="TyrKc"/>
    <property type="match status" value="1"/>
</dbReference>
<dbReference type="SUPFAM" id="SSF49265">
    <property type="entry name" value="Fibronectin type III"/>
    <property type="match status" value="1"/>
</dbReference>
<dbReference type="SUPFAM" id="SSF48726">
    <property type="entry name" value="Immunoglobulin"/>
    <property type="match status" value="2"/>
</dbReference>
<dbReference type="SUPFAM" id="SSF56112">
    <property type="entry name" value="Protein kinase-like (PK-like)"/>
    <property type="match status" value="1"/>
</dbReference>
<dbReference type="PROSITE" id="PS50853">
    <property type="entry name" value="FN3"/>
    <property type="match status" value="2"/>
</dbReference>
<dbReference type="PROSITE" id="PS50835">
    <property type="entry name" value="IG_LIKE"/>
    <property type="match status" value="2"/>
</dbReference>
<dbReference type="PROSITE" id="PS00107">
    <property type="entry name" value="PROTEIN_KINASE_ATP"/>
    <property type="match status" value="1"/>
</dbReference>
<dbReference type="PROSITE" id="PS50011">
    <property type="entry name" value="PROTEIN_KINASE_DOM"/>
    <property type="match status" value="1"/>
</dbReference>
<dbReference type="PROSITE" id="PS00109">
    <property type="entry name" value="PROTEIN_KINASE_TYR"/>
    <property type="match status" value="1"/>
</dbReference>